<proteinExistence type="evidence at transcript level"/>
<accession>Q6P4S2</accession>
<organism>
    <name type="scientific">Xenopus laevis</name>
    <name type="common">African clawed frog</name>
    <dbReference type="NCBI Taxonomy" id="8355"/>
    <lineage>
        <taxon>Eukaryota</taxon>
        <taxon>Metazoa</taxon>
        <taxon>Chordata</taxon>
        <taxon>Craniata</taxon>
        <taxon>Vertebrata</taxon>
        <taxon>Euteleostomi</taxon>
        <taxon>Amphibia</taxon>
        <taxon>Batrachia</taxon>
        <taxon>Anura</taxon>
        <taxon>Pipoidea</taxon>
        <taxon>Pipidae</taxon>
        <taxon>Xenopodinae</taxon>
        <taxon>Xenopus</taxon>
        <taxon>Xenopus</taxon>
    </lineage>
</organism>
<sequence>MSYGWYHGNITRSKAEDLLSQAGKDGSYLVRDSESVCRAYALCVLNQNCVHTYRILQNAEHQLSVQASEGVPMRFFTNLVELIEFYRRENVGLVTHLQYPIEKEEEGPEEPDEEQEPAPPNVPPRNFAFTPPSETKECQTAIERAPAANASLLLSETLLQRFQDTDSRCIPEEHLQAICDYFSLHIVSDCDMVRTGSQTLPQFKKLLMTLCTGLHRELTRTLPTLESLQVAIDPQLSPGFKQRSPLPGDSATNNMVNKLTHLTSMVSNLEEKVKTVLMEGAAVKHRRSLIPPIIFEVKADSIGISQKTHLKVDVETGKLIIKKSKDGPDDKFYPSKKILQLIKSQKFPHKLVIVLETEKEKTQRKEYVFADSKKREGFCQLLQQMKNKHSGQSEPDMLSIFIGTWNMGDAPPPKNITPWFQCKGQGKTRDDTADYIEHDIYVIGTQEDPLSEKEWTDTLIHSLREITSVEYKVITTQTLWNIRIVVLAKPEHAHRISHVCTNSVKTGIANTLGNKGAVGASFMFNGTSFGFINSHLTSGSEKKLRRNQNYFNILRFLVLGDKKLSPFNFTHRFNHLFWLGDLNYRLQLPNTEAENIIQKIKQQQHQELLPHDQLNLERRESLIFFQFHEEEITFPPTYRYERGSRERYCYTKQKATGIKYNLPSWCDRILWKSYPQMHILCQSYGCTDDITTSDHSPVFGTFQVGVTSQFVSKNNPGDSGDLEAQGHIELMNCKATLYTKSHTKFYIEFHSPCLENMVKSSEAEDQEGNNGTLVVKFGVLPKLTPIISDLEYLLDQHLLICIKSSDTDESYGEGCIALRKEDTEQQFPFCTILTHHGEETGLFCGEICLPASGGKQREKLYDFVKIEKDETVAQKQLKHPYSQSMEQSRIMKSISEKSAMIARMRAAPETQNSMDHTASVAAISSQAKQSPPTTPPGFRGSEPRQKPGSPVQGRGDTPITSPPRTTLSTQKFSHSNTNRTAPAARPQDSLQITVPSDPHEMVDNPLYGPVNNTLYPPTA</sequence>
<protein>
    <recommendedName>
        <fullName>Phosphatidylinositol 3,4,5-trisphosphate 5-phosphatase 1</fullName>
        <ecNumber evidence="1">3.1.3.86</ecNumber>
    </recommendedName>
    <alternativeName>
        <fullName>Inositol polyphosphate-5-phosphatase D</fullName>
        <ecNumber evidence="1">3.1.3.56</ecNumber>
    </alternativeName>
    <alternativeName>
        <fullName>Phosphatidylinositol-4,5-bisphosphate 5-phosphatase</fullName>
        <ecNumber evidence="1">3.1.3.36</ecNumber>
    </alternativeName>
    <alternativeName>
        <fullName>SH2 domain-containing inositol 5'-phosphatase 1</fullName>
        <shortName>SH2 domain-containing inositol phosphatase 1</shortName>
        <shortName>SHIP-1</shortName>
    </alternativeName>
</protein>
<evidence type="ECO:0000250" key="1">
    <source>
        <dbReference type="UniProtKB" id="Q92835"/>
    </source>
</evidence>
<evidence type="ECO:0000250" key="2">
    <source>
        <dbReference type="UniProtKB" id="Q9ES52"/>
    </source>
</evidence>
<evidence type="ECO:0000255" key="3">
    <source>
        <dbReference type="PROSITE-ProRule" id="PRU00191"/>
    </source>
</evidence>
<evidence type="ECO:0000256" key="4">
    <source>
        <dbReference type="SAM" id="MobiDB-lite"/>
    </source>
</evidence>
<evidence type="ECO:0000305" key="5"/>
<reference key="1">
    <citation type="submission" date="2003-12" db="EMBL/GenBank/DDBJ databases">
        <authorList>
            <consortium name="NIH - Xenopus Gene Collection (XGC) project"/>
        </authorList>
    </citation>
    <scope>NUCLEOTIDE SEQUENCE [LARGE SCALE MRNA]</scope>
    <source>
        <tissue>Spleen</tissue>
    </source>
</reference>
<keyword id="KW-1003">Cell membrane</keyword>
<keyword id="KW-0963">Cytoplasm</keyword>
<keyword id="KW-0206">Cytoskeleton</keyword>
<keyword id="KW-0378">Hydrolase</keyword>
<keyword id="KW-0391">Immunity</keyword>
<keyword id="KW-0443">Lipid metabolism</keyword>
<keyword id="KW-0472">Membrane</keyword>
<keyword id="KW-0597">Phosphoprotein</keyword>
<keyword id="KW-1185">Reference proteome</keyword>
<keyword id="KW-0677">Repeat</keyword>
<keyword id="KW-0727">SH2 domain</keyword>
<keyword id="KW-0729">SH3-binding</keyword>
<dbReference type="EC" id="3.1.3.86" evidence="1"/>
<dbReference type="EC" id="3.1.3.56" evidence="1"/>
<dbReference type="EC" id="3.1.3.36" evidence="1"/>
<dbReference type="EMBL" id="BC063273">
    <property type="protein sequence ID" value="AAH63273.1"/>
    <property type="molecule type" value="mRNA"/>
</dbReference>
<dbReference type="RefSeq" id="NP_001083668.1">
    <property type="nucleotide sequence ID" value="NM_001090199.1"/>
</dbReference>
<dbReference type="SMR" id="Q6P4S2"/>
<dbReference type="DNASU" id="399051"/>
<dbReference type="GeneID" id="399051"/>
<dbReference type="KEGG" id="xla:399051"/>
<dbReference type="AGR" id="Xenbase:XB-GENE-6071368"/>
<dbReference type="CTD" id="399051"/>
<dbReference type="Xenbase" id="XB-GENE-6071368">
    <property type="gene designation" value="inpp5d.L"/>
</dbReference>
<dbReference type="OrthoDB" id="7862313at2759"/>
<dbReference type="Proteomes" id="UP000186698">
    <property type="component" value="Chromosome 5L"/>
</dbReference>
<dbReference type="Bgee" id="399051">
    <property type="expression patterns" value="Expressed in spleen and 18 other cell types or tissues"/>
</dbReference>
<dbReference type="GO" id="GO:0005856">
    <property type="term" value="C:cytoskeleton"/>
    <property type="evidence" value="ECO:0007669"/>
    <property type="project" value="UniProtKB-SubCell"/>
</dbReference>
<dbReference type="GO" id="GO:0005829">
    <property type="term" value="C:cytosol"/>
    <property type="evidence" value="ECO:0000318"/>
    <property type="project" value="GO_Central"/>
</dbReference>
<dbReference type="GO" id="GO:0045121">
    <property type="term" value="C:membrane raft"/>
    <property type="evidence" value="ECO:0007669"/>
    <property type="project" value="UniProtKB-SubCell"/>
</dbReference>
<dbReference type="GO" id="GO:0005886">
    <property type="term" value="C:plasma membrane"/>
    <property type="evidence" value="ECO:0007669"/>
    <property type="project" value="UniProtKB-SubCell"/>
</dbReference>
<dbReference type="GO" id="GO:0052659">
    <property type="term" value="F:inositol-1,3,4,5-tetrakisphosphate 5-phosphatase activity"/>
    <property type="evidence" value="ECO:0007669"/>
    <property type="project" value="RHEA"/>
</dbReference>
<dbReference type="GO" id="GO:0034485">
    <property type="term" value="F:phosphatidylinositol-3,4,5-trisphosphate 5-phosphatase activity"/>
    <property type="evidence" value="ECO:0007669"/>
    <property type="project" value="UniProtKB-EC"/>
</dbReference>
<dbReference type="GO" id="GO:0004439">
    <property type="term" value="F:phosphatidylinositol-4,5-bisphosphate 5-phosphatase activity"/>
    <property type="evidence" value="ECO:0007669"/>
    <property type="project" value="UniProtKB-EC"/>
</dbReference>
<dbReference type="GO" id="GO:0017124">
    <property type="term" value="F:SH3 domain binding"/>
    <property type="evidence" value="ECO:0007669"/>
    <property type="project" value="UniProtKB-KW"/>
</dbReference>
<dbReference type="GO" id="GO:0002376">
    <property type="term" value="P:immune system process"/>
    <property type="evidence" value="ECO:0007669"/>
    <property type="project" value="UniProtKB-KW"/>
</dbReference>
<dbReference type="GO" id="GO:0045779">
    <property type="term" value="P:negative regulation of bone resorption"/>
    <property type="evidence" value="ECO:0000318"/>
    <property type="project" value="GO_Central"/>
</dbReference>
<dbReference type="GO" id="GO:0045659">
    <property type="term" value="P:negative regulation of neutrophil differentiation"/>
    <property type="evidence" value="ECO:0000318"/>
    <property type="project" value="GO_Central"/>
</dbReference>
<dbReference type="GO" id="GO:0009968">
    <property type="term" value="P:negative regulation of signal transduction"/>
    <property type="evidence" value="ECO:0000318"/>
    <property type="project" value="GO_Central"/>
</dbReference>
<dbReference type="GO" id="GO:0046856">
    <property type="term" value="P:phosphatidylinositol dephosphorylation"/>
    <property type="evidence" value="ECO:0007669"/>
    <property type="project" value="InterPro"/>
</dbReference>
<dbReference type="GO" id="GO:0045579">
    <property type="term" value="P:positive regulation of B cell differentiation"/>
    <property type="evidence" value="ECO:0000318"/>
    <property type="project" value="GO_Central"/>
</dbReference>
<dbReference type="GO" id="GO:0050776">
    <property type="term" value="P:regulation of immune response"/>
    <property type="evidence" value="ECO:0000318"/>
    <property type="project" value="GO_Central"/>
</dbReference>
<dbReference type="CDD" id="cd09091">
    <property type="entry name" value="INPP5c_SHIP"/>
    <property type="match status" value="1"/>
</dbReference>
<dbReference type="CDD" id="cd10343">
    <property type="entry name" value="SH2_SHIP"/>
    <property type="match status" value="1"/>
</dbReference>
<dbReference type="FunFam" id="3.30.505.10:FF:000035">
    <property type="entry name" value="phosphatidylinositol 3,4,5-trisphosphate 5-phosphatase 1"/>
    <property type="match status" value="1"/>
</dbReference>
<dbReference type="FunFam" id="3.60.10.10:FF:000005">
    <property type="entry name" value="phosphatidylinositol 3,4,5-trisphosphate 5-phosphatase 1"/>
    <property type="match status" value="1"/>
</dbReference>
<dbReference type="Gene3D" id="3.60.10.10">
    <property type="entry name" value="Endonuclease/exonuclease/phosphatase"/>
    <property type="match status" value="1"/>
</dbReference>
<dbReference type="Gene3D" id="3.30.505.10">
    <property type="entry name" value="SH2 domain"/>
    <property type="match status" value="1"/>
</dbReference>
<dbReference type="InterPro" id="IPR036691">
    <property type="entry name" value="Endo/exonu/phosph_ase_sf"/>
</dbReference>
<dbReference type="InterPro" id="IPR000300">
    <property type="entry name" value="IPPc"/>
</dbReference>
<dbReference type="InterPro" id="IPR000980">
    <property type="entry name" value="SH2"/>
</dbReference>
<dbReference type="InterPro" id="IPR036860">
    <property type="entry name" value="SH2_dom_sf"/>
</dbReference>
<dbReference type="PANTHER" id="PTHR46051:SF3">
    <property type="entry name" value="PHOSPHATIDYLINOSITOL 3,4,5-TRISPHOSPHATE 5-PHOSPHATASE 1"/>
    <property type="match status" value="1"/>
</dbReference>
<dbReference type="PANTHER" id="PTHR46051">
    <property type="entry name" value="SH2 DOMAIN-CONTAINING PROTEIN"/>
    <property type="match status" value="1"/>
</dbReference>
<dbReference type="Pfam" id="PF24147">
    <property type="entry name" value="C2_SHIP1-2_2nd"/>
    <property type="match status" value="1"/>
</dbReference>
<dbReference type="Pfam" id="PF24150">
    <property type="entry name" value="C2_SHIP1-2_first"/>
    <property type="match status" value="1"/>
</dbReference>
<dbReference type="Pfam" id="PF22669">
    <property type="entry name" value="Exo_endo_phos2"/>
    <property type="match status" value="1"/>
</dbReference>
<dbReference type="Pfam" id="PF00017">
    <property type="entry name" value="SH2"/>
    <property type="match status" value="1"/>
</dbReference>
<dbReference type="PRINTS" id="PR00401">
    <property type="entry name" value="SH2DOMAIN"/>
</dbReference>
<dbReference type="SMART" id="SM00128">
    <property type="entry name" value="IPPc"/>
    <property type="match status" value="1"/>
</dbReference>
<dbReference type="SMART" id="SM00252">
    <property type="entry name" value="SH2"/>
    <property type="match status" value="1"/>
</dbReference>
<dbReference type="SUPFAM" id="SSF56219">
    <property type="entry name" value="DNase I-like"/>
    <property type="match status" value="1"/>
</dbReference>
<dbReference type="SUPFAM" id="SSF55550">
    <property type="entry name" value="SH2 domain"/>
    <property type="match status" value="1"/>
</dbReference>
<dbReference type="PROSITE" id="PS50001">
    <property type="entry name" value="SH2"/>
    <property type="match status" value="1"/>
</dbReference>
<feature type="chain" id="PRO_0000302869" description="Phosphatidylinositol 3,4,5-trisphosphate 5-phosphatase 1">
    <location>
        <begin position="1"/>
        <end position="1019"/>
    </location>
</feature>
<feature type="domain" description="SH2" evidence="3">
    <location>
        <begin position="5"/>
        <end position="101"/>
    </location>
</feature>
<feature type="region of interest" description="Disordered" evidence="4">
    <location>
        <begin position="103"/>
        <end position="133"/>
    </location>
</feature>
<feature type="region of interest" description="Disordered" evidence="4">
    <location>
        <begin position="909"/>
        <end position="1019"/>
    </location>
</feature>
<feature type="short sequence motif" description="SH3-binding 1">
    <location>
        <begin position="120"/>
        <end position="125"/>
    </location>
</feature>
<feature type="short sequence motif" description="SH3-binding 2">
    <location>
        <begin position="966"/>
        <end position="971"/>
    </location>
</feature>
<feature type="short sequence motif" description="NPXY motif">
    <location>
        <begin position="1004"/>
        <end position="1007"/>
    </location>
</feature>
<feature type="compositionally biased region" description="Acidic residues" evidence="4">
    <location>
        <begin position="103"/>
        <end position="116"/>
    </location>
</feature>
<feature type="compositionally biased region" description="Polar residues" evidence="4">
    <location>
        <begin position="909"/>
        <end position="931"/>
    </location>
</feature>
<feature type="compositionally biased region" description="Polar residues" evidence="4">
    <location>
        <begin position="958"/>
        <end position="980"/>
    </location>
</feature>
<feature type="compositionally biased region" description="Polar residues" evidence="4">
    <location>
        <begin position="1010"/>
        <end position="1019"/>
    </location>
</feature>
<feature type="modified residue" description="Phosphotyrosine" evidence="2">
    <location>
        <position position="1007"/>
    </location>
</feature>
<comment type="function">
    <text evidence="1">Phosphatidylinositol (PtdIns) phosphatase that specifically hydrolyzes the 5-phosphate of phosphatidylinositol-3,4,5-trisphosphate (PtdIns(3,4,5)P3) to produce PtdIns(3,4)P2, thereby negatively regulating the PI3K (phosphoinositide 3-kinase) pathways. Able also to hydrolyzes the 5-phosphate of phosphatidylinositol-4,5-bisphosphate (PtdIns(4,5)P3) and inositol 1,3,4,5-tetrakisphosphate. Acts as a negative regulator of B-cell antigen receptor signaling. Mediates signaling from the FC-gamma-RIIB receptor (FCGR2B), playing a central role in terminating signal transduction from activating immune/hematopoietic cell receptor systems. Acts as a negative regulator of myeloid cell proliferation/survival and chemotaxis, mast cell degranulation, immune cells homeostasis, integrin alpha-IIb/beta-3 signaling in platelets and JNK signaling in B-cells.</text>
</comment>
<comment type="catalytic activity">
    <reaction evidence="1">
        <text>a 1,2-diacyl-sn-glycero-3-phospho-(1D-myo-inositol-3,4,5-trisphosphate) + H2O = a 1,2-diacyl-sn-glycero-3-phospho-(1D-myo-inositol-3,4-bisphosphate) + phosphate</text>
        <dbReference type="Rhea" id="RHEA:25528"/>
        <dbReference type="ChEBI" id="CHEBI:15377"/>
        <dbReference type="ChEBI" id="CHEBI:43474"/>
        <dbReference type="ChEBI" id="CHEBI:57658"/>
        <dbReference type="ChEBI" id="CHEBI:57836"/>
        <dbReference type="EC" id="3.1.3.86"/>
    </reaction>
</comment>
<comment type="catalytic activity">
    <reaction evidence="1">
        <text>1D-myo-inositol 1,3,4,5-tetrakisphosphate + H2O = 1D-myo-inositol 1,3,4-trisphosphate + phosphate</text>
        <dbReference type="Rhea" id="RHEA:11392"/>
        <dbReference type="ChEBI" id="CHEBI:15377"/>
        <dbReference type="ChEBI" id="CHEBI:43474"/>
        <dbReference type="ChEBI" id="CHEBI:57895"/>
        <dbReference type="ChEBI" id="CHEBI:58414"/>
        <dbReference type="EC" id="3.1.3.56"/>
    </reaction>
</comment>
<comment type="catalytic activity">
    <reaction evidence="1">
        <text>a 1,2-diacyl-sn-glycero-3-phospho-(1D-myo-inositol-4,5-bisphosphate) + H2O = a 1,2-diacyl-sn-glycero-3-phospho-(1D-myo-inositol 4-phosphate) + phosphate</text>
        <dbReference type="Rhea" id="RHEA:22764"/>
        <dbReference type="ChEBI" id="CHEBI:15377"/>
        <dbReference type="ChEBI" id="CHEBI:43474"/>
        <dbReference type="ChEBI" id="CHEBI:58178"/>
        <dbReference type="ChEBI" id="CHEBI:58456"/>
        <dbReference type="EC" id="3.1.3.36"/>
    </reaction>
</comment>
<comment type="subcellular location">
    <subcellularLocation>
        <location evidence="2">Cytoplasm</location>
    </subcellularLocation>
    <subcellularLocation>
        <location evidence="2">Cell membrane</location>
        <topology evidence="2">Peripheral membrane protein</topology>
    </subcellularLocation>
    <subcellularLocation>
        <location evidence="2">Membrane raft</location>
    </subcellularLocation>
    <subcellularLocation>
        <location evidence="2">Cytoplasm</location>
        <location evidence="2">Cytoskeleton</location>
    </subcellularLocation>
    <text evidence="2">Translocates to the plasma membrane when activated, translocation is probably due to different mechanisms depending on the stimulus and cell type.</text>
</comment>
<comment type="domain">
    <text evidence="2">The SH2 domain interacts with tyrosine phosphorylated forms of proteins.</text>
</comment>
<comment type="domain">
    <text evidence="2">The NPXY sequence motif found in many tyrosine-phosphorylated proteins is required for the specific binding of the PID domain.</text>
</comment>
<comment type="PTM">
    <text evidence="2">Tyrosine phosphorylated by the members of the SRC family after exposure to a diverse array of extracellular stimuli.</text>
</comment>
<comment type="similarity">
    <text evidence="5">Belongs to the inositol 1,4,5-trisphosphate 5-phosphatase family.</text>
</comment>
<name>SHIP1_XENLA</name>
<gene>
    <name type="primary">inpp5d</name>
    <name type="synonym">ship</name>
    <name type="synonym">ship1</name>
</gene>